<geneLocation type="mitochondrion"/>
<comment type="function">
    <text evidence="1">Subunit a, of the mitochondrial membrane ATP synthase complex (F(1)F(0) ATP synthase or Complex V) that produces ATP from ADP in the presence of a proton gradient across the membrane which is generated by electron transport complexes of the respiratory chain. ATP synthase complex consist of a soluble F(1) head domain - the catalytic core - and a membrane F(1) domain - the membrane proton channel. These two domains are linked by a central stalk rotating inside the F(1) region and a stationary peripheral stalk. During catalysis, ATP synthesis in the catalytic domain of F(1) is coupled via a rotary mechanism of the central stalk subunits to proton translocation. With the subunit c (ATP5MC1), forms the proton-conducting channel in the F(0) domain, that contains two crucial half-channels (inlet and outlet) that facilitate proton movement from the mitochondrial intermembrane space (IMS) into the matrix. Protons are taken up via the inlet half-channel and released through the outlet half-channel, following a Grotthuss mechanism.</text>
</comment>
<comment type="catalytic activity">
    <reaction evidence="1">
        <text>H(+)(in) = H(+)(out)</text>
        <dbReference type="Rhea" id="RHEA:34979"/>
        <dbReference type="ChEBI" id="CHEBI:15378"/>
    </reaction>
</comment>
<comment type="subunit">
    <text evidence="1">Component of the ATP synthase complex composed at least of ATP5F1A/subunit alpha, ATP5F1B/subunit beta, ATP5MC1/subunit c (homooctomer), MT-ATP6/subunit a, MT-ATP8/subunit 8, ATP5ME/subunit e, ATP5MF/subunit f, ATP5MG/subunit g, ATP5MK/subunit k, ATP5MJ/subunit j, ATP5F1C/subunit gamma, ATP5F1D/subunit delta, ATP5F1E/subunit epsilon, ATP5PF/subunit F6, ATP5PB/subunit b, ATP5PD/subunit d, ATP5PO/subunit OSCP. ATP synthase complex consists of a soluble F(1) head domain (subunits alpha(3) and beta(3)) - the catalytic core - and a membrane F(0) domain - the membrane proton channel (subunits c, a, 8, e, f, g, k and j). These two domains are linked by a central stalk (subunits gamma, delta, and epsilon) rotating inside the F1 region and a stationary peripheral stalk (subunits F6, b, d, and OSCP). Interacts with DNAJC30; interaction is direct.</text>
</comment>
<comment type="subcellular location">
    <subcellularLocation>
        <location>Mitochondrion inner membrane</location>
        <topology>Multi-pass membrane protein</topology>
    </subcellularLocation>
</comment>
<comment type="similarity">
    <text evidence="3">Belongs to the ATPase A chain family.</text>
</comment>
<name>ATP6_PANPA</name>
<organism>
    <name type="scientific">Pan paniscus</name>
    <name type="common">Pygmy chimpanzee</name>
    <name type="synonym">Bonobo</name>
    <dbReference type="NCBI Taxonomy" id="9597"/>
    <lineage>
        <taxon>Eukaryota</taxon>
        <taxon>Metazoa</taxon>
        <taxon>Chordata</taxon>
        <taxon>Craniata</taxon>
        <taxon>Vertebrata</taxon>
        <taxon>Euteleostomi</taxon>
        <taxon>Mammalia</taxon>
        <taxon>Eutheria</taxon>
        <taxon>Euarchontoglires</taxon>
        <taxon>Primates</taxon>
        <taxon>Haplorrhini</taxon>
        <taxon>Catarrhini</taxon>
        <taxon>Hominidae</taxon>
        <taxon>Pan</taxon>
    </lineage>
</organism>
<accession>Q9T9W9</accession>
<feature type="chain" id="PRO_0000082147" description="ATP synthase F(0) complex subunit a">
    <location>
        <begin position="1"/>
        <end position="226"/>
    </location>
</feature>
<feature type="transmembrane region" description="Helical" evidence="2">
    <location>
        <begin position="6"/>
        <end position="26"/>
    </location>
</feature>
<feature type="transmembrane region" description="Helical" evidence="2">
    <location>
        <begin position="68"/>
        <end position="88"/>
    </location>
</feature>
<feature type="transmembrane region" description="Helical" evidence="2">
    <location>
        <begin position="97"/>
        <end position="117"/>
    </location>
</feature>
<feature type="transmembrane region" description="Helical" evidence="2">
    <location>
        <begin position="138"/>
        <end position="158"/>
    </location>
</feature>
<feature type="transmembrane region" description="Helical" evidence="2">
    <location>
        <begin position="164"/>
        <end position="184"/>
    </location>
</feature>
<feature type="transmembrane region" description="Helical" evidence="2">
    <location>
        <begin position="189"/>
        <end position="209"/>
    </location>
</feature>
<gene>
    <name evidence="1" type="primary">MT-ATP6</name>
    <name type="synonym">ATP6</name>
    <name type="synonym">ATPASE6</name>
    <name type="synonym">MTATP6</name>
</gene>
<proteinExistence type="inferred from homology"/>
<reference key="1">
    <citation type="journal article" date="1995" name="Proc. Natl. Acad. Sci. U.S.A.">
        <title>Recent African origin of modern humans revealed by complete sequences of hominoid mitochondrial DNAs.</title>
        <authorList>
            <person name="Horai S."/>
            <person name="Hayasaka K."/>
            <person name="Kondo R."/>
            <person name="Tsugane K."/>
            <person name="Takahata N."/>
        </authorList>
    </citation>
    <scope>NUCLEOTIDE SEQUENCE [GENOMIC DNA]</scope>
</reference>
<keyword id="KW-0066">ATP synthesis</keyword>
<keyword id="KW-0138">CF(0)</keyword>
<keyword id="KW-0375">Hydrogen ion transport</keyword>
<keyword id="KW-0406">Ion transport</keyword>
<keyword id="KW-0472">Membrane</keyword>
<keyword id="KW-0496">Mitochondrion</keyword>
<keyword id="KW-0999">Mitochondrion inner membrane</keyword>
<keyword id="KW-1185">Reference proteome</keyword>
<keyword id="KW-0812">Transmembrane</keyword>
<keyword id="KW-1133">Transmembrane helix</keyword>
<keyword id="KW-0813">Transport</keyword>
<evidence type="ECO:0000250" key="1">
    <source>
        <dbReference type="UniProtKB" id="P00846"/>
    </source>
</evidence>
<evidence type="ECO:0000255" key="2"/>
<evidence type="ECO:0000305" key="3"/>
<dbReference type="EMBL" id="D38116">
    <property type="protein sequence ID" value="BAA85297.1"/>
    <property type="molecule type" value="Genomic_DNA"/>
</dbReference>
<dbReference type="RefSeq" id="NP_008204.1">
    <property type="nucleotide sequence ID" value="NC_001644.1"/>
</dbReference>
<dbReference type="SMR" id="Q9T9W9"/>
<dbReference type="STRING" id="9597.ENSPPAP00000000006"/>
<dbReference type="Ensembl" id="ENSPPAT00000000022.1">
    <property type="protein sequence ID" value="ENSPPAP00000000006.1"/>
    <property type="gene ID" value="ENSPPAG00000000022.1"/>
</dbReference>
<dbReference type="GeneID" id="807880"/>
<dbReference type="KEGG" id="pps:807880"/>
<dbReference type="CTD" id="4508"/>
<dbReference type="GeneTree" id="ENSGT00390000005568"/>
<dbReference type="OMA" id="FFDQFMS"/>
<dbReference type="Proteomes" id="UP000240080">
    <property type="component" value="Mitochondrion"/>
</dbReference>
<dbReference type="Bgee" id="ENSPPAG00000000022">
    <property type="expression patterns" value="Expressed in heart and 6 other cell types or tissues"/>
</dbReference>
<dbReference type="GO" id="GO:0005743">
    <property type="term" value="C:mitochondrial inner membrane"/>
    <property type="evidence" value="ECO:0007669"/>
    <property type="project" value="UniProtKB-SubCell"/>
</dbReference>
<dbReference type="GO" id="GO:0045259">
    <property type="term" value="C:proton-transporting ATP synthase complex"/>
    <property type="evidence" value="ECO:0000250"/>
    <property type="project" value="UniProtKB"/>
</dbReference>
<dbReference type="GO" id="GO:0015252">
    <property type="term" value="F:proton channel activity"/>
    <property type="evidence" value="ECO:0000250"/>
    <property type="project" value="UniProtKB"/>
</dbReference>
<dbReference type="GO" id="GO:0046933">
    <property type="term" value="F:proton-transporting ATP synthase activity, rotational mechanism"/>
    <property type="evidence" value="ECO:0007669"/>
    <property type="project" value="Ensembl"/>
</dbReference>
<dbReference type="GO" id="GO:0015986">
    <property type="term" value="P:proton motive force-driven ATP synthesis"/>
    <property type="evidence" value="ECO:0000250"/>
    <property type="project" value="UniProtKB"/>
</dbReference>
<dbReference type="GO" id="GO:0042776">
    <property type="term" value="P:proton motive force-driven mitochondrial ATP synthesis"/>
    <property type="evidence" value="ECO:0007669"/>
    <property type="project" value="Ensembl"/>
</dbReference>
<dbReference type="GO" id="GO:1902600">
    <property type="term" value="P:proton transmembrane transport"/>
    <property type="evidence" value="ECO:0000250"/>
    <property type="project" value="UniProtKB"/>
</dbReference>
<dbReference type="CDD" id="cd00310">
    <property type="entry name" value="ATP-synt_Fo_a_6"/>
    <property type="match status" value="1"/>
</dbReference>
<dbReference type="FunFam" id="1.20.120.220:FF:000004">
    <property type="entry name" value="ATP synthase subunit a"/>
    <property type="match status" value="1"/>
</dbReference>
<dbReference type="Gene3D" id="1.20.120.220">
    <property type="entry name" value="ATP synthase, F0 complex, subunit A"/>
    <property type="match status" value="1"/>
</dbReference>
<dbReference type="InterPro" id="IPR000568">
    <property type="entry name" value="ATP_synth_F0_asu"/>
</dbReference>
<dbReference type="InterPro" id="IPR023011">
    <property type="entry name" value="ATP_synth_F0_asu_AS"/>
</dbReference>
<dbReference type="InterPro" id="IPR045083">
    <property type="entry name" value="ATP_synth_F0_asu_bact/mt"/>
</dbReference>
<dbReference type="InterPro" id="IPR035908">
    <property type="entry name" value="F0_ATP_A_sf"/>
</dbReference>
<dbReference type="NCBIfam" id="TIGR01131">
    <property type="entry name" value="ATP_synt_6_or_A"/>
    <property type="match status" value="1"/>
</dbReference>
<dbReference type="PANTHER" id="PTHR11410">
    <property type="entry name" value="ATP SYNTHASE SUBUNIT A"/>
    <property type="match status" value="1"/>
</dbReference>
<dbReference type="PANTHER" id="PTHR11410:SF0">
    <property type="entry name" value="ATP SYNTHASE SUBUNIT A"/>
    <property type="match status" value="1"/>
</dbReference>
<dbReference type="Pfam" id="PF00119">
    <property type="entry name" value="ATP-synt_A"/>
    <property type="match status" value="1"/>
</dbReference>
<dbReference type="PRINTS" id="PR00123">
    <property type="entry name" value="ATPASEA"/>
</dbReference>
<dbReference type="SUPFAM" id="SSF81336">
    <property type="entry name" value="F1F0 ATP synthase subunit A"/>
    <property type="match status" value="1"/>
</dbReference>
<dbReference type="PROSITE" id="PS00449">
    <property type="entry name" value="ATPASE_A"/>
    <property type="match status" value="1"/>
</dbReference>
<sequence>MNENLFASFAAPTILGLPAAVLIILFPPLLVPTSKHLINNRLITTQQWLIQLTSKQMMTMHNTKGRTWSLMLVSLIIFIATTNLLGLLPHSFTPTTQLSMNLAMAIPLWAGTVVMGFRFKTKNALAHFLPQGTPTPLIPMLIIIETISLFIQPMALAVRLTANITAGHLLMHLIGSATLALSTISLPSTLIIFTILILLTVLEIAVALIQAYVFTLLVSLYLHDNT</sequence>
<protein>
    <recommendedName>
        <fullName evidence="1">ATP synthase F(0) complex subunit a</fullName>
    </recommendedName>
    <alternativeName>
        <fullName>F-ATPase protein 6</fullName>
    </alternativeName>
    <alternativeName>
        <fullName evidence="1">Proton-conducting channel, ATP synthase F(0) complex subunit a</fullName>
    </alternativeName>
</protein>